<proteinExistence type="inferred from homology"/>
<feature type="chain" id="PRO_0000132798" description="Large ribosomal subunit protein eL18">
    <location>
        <begin position="1"/>
        <end position="122"/>
    </location>
</feature>
<sequence length="122" mass="13252">MPPNPTGPTNSQLRMLARFLRKAARANSASIWRVVAEFVEKPRRQRVIVNVGKLNRVAKEGDVVVVPGKLLAGGQLNKKIIVAAVKISPKAARKVIEAGGEVLTIPELVRKYPRGSGVRIVI</sequence>
<keyword id="KW-1185">Reference proteome</keyword>
<keyword id="KW-0687">Ribonucleoprotein</keyword>
<keyword id="KW-0689">Ribosomal protein</keyword>
<comment type="similarity">
    <text evidence="1">Belongs to the eukaryotic ribosomal protein eL18 family.</text>
</comment>
<name>RL18E_PYRAE</name>
<protein>
    <recommendedName>
        <fullName evidence="1">Large ribosomal subunit protein eL18</fullName>
    </recommendedName>
    <alternativeName>
        <fullName evidence="2">50S ribosomal protein L18e</fullName>
    </alternativeName>
</protein>
<accession>Q8ZYQ2</accession>
<evidence type="ECO:0000255" key="1">
    <source>
        <dbReference type="HAMAP-Rule" id="MF_00329"/>
    </source>
</evidence>
<evidence type="ECO:0000305" key="2"/>
<dbReference type="EMBL" id="AE009441">
    <property type="protein sequence ID" value="AAL62941.1"/>
    <property type="molecule type" value="Genomic_DNA"/>
</dbReference>
<dbReference type="RefSeq" id="WP_011007413.1">
    <property type="nucleotide sequence ID" value="NC_003364.1"/>
</dbReference>
<dbReference type="SMR" id="Q8ZYQ2"/>
<dbReference type="FunCoup" id="Q8ZYQ2">
    <property type="interactions" value="59"/>
</dbReference>
<dbReference type="STRING" id="178306.PAE0672"/>
<dbReference type="EnsemblBacteria" id="AAL62941">
    <property type="protein sequence ID" value="AAL62941"/>
    <property type="gene ID" value="PAE0672"/>
</dbReference>
<dbReference type="GeneID" id="1465166"/>
<dbReference type="KEGG" id="pai:PAE0672"/>
<dbReference type="PATRIC" id="fig|178306.9.peg.486"/>
<dbReference type="eggNOG" id="arCOG00780">
    <property type="taxonomic scope" value="Archaea"/>
</dbReference>
<dbReference type="HOGENOM" id="CLU_146465_0_0_2"/>
<dbReference type="InParanoid" id="Q8ZYQ2"/>
<dbReference type="Proteomes" id="UP000002439">
    <property type="component" value="Chromosome"/>
</dbReference>
<dbReference type="GO" id="GO:0022625">
    <property type="term" value="C:cytosolic large ribosomal subunit"/>
    <property type="evidence" value="ECO:0000318"/>
    <property type="project" value="GO_Central"/>
</dbReference>
<dbReference type="GO" id="GO:0003723">
    <property type="term" value="F:RNA binding"/>
    <property type="evidence" value="ECO:0000318"/>
    <property type="project" value="GO_Central"/>
</dbReference>
<dbReference type="GO" id="GO:0003735">
    <property type="term" value="F:structural constituent of ribosome"/>
    <property type="evidence" value="ECO:0000318"/>
    <property type="project" value="GO_Central"/>
</dbReference>
<dbReference type="GO" id="GO:0006412">
    <property type="term" value="P:translation"/>
    <property type="evidence" value="ECO:0007669"/>
    <property type="project" value="UniProtKB-UniRule"/>
</dbReference>
<dbReference type="Gene3D" id="3.100.10.10">
    <property type="match status" value="1"/>
</dbReference>
<dbReference type="HAMAP" id="MF_00329">
    <property type="entry name" value="Ribosomal_eL18"/>
    <property type="match status" value="1"/>
</dbReference>
<dbReference type="InterPro" id="IPR000039">
    <property type="entry name" value="Ribosomal_eL18"/>
</dbReference>
<dbReference type="InterPro" id="IPR022947">
    <property type="entry name" value="Ribosomal_eL18_arc"/>
</dbReference>
<dbReference type="InterPro" id="IPR021131">
    <property type="entry name" value="Ribosomal_uL15/eL18"/>
</dbReference>
<dbReference type="InterPro" id="IPR036227">
    <property type="entry name" value="Ribosomal_uL15/eL18_sf"/>
</dbReference>
<dbReference type="InterPro" id="IPR001196">
    <property type="entry name" value="Ribosomal_uL15_CS"/>
</dbReference>
<dbReference type="NCBIfam" id="NF003079">
    <property type="entry name" value="PRK04005.1"/>
    <property type="match status" value="1"/>
</dbReference>
<dbReference type="PANTHER" id="PTHR10934">
    <property type="entry name" value="60S RIBOSOMAL PROTEIN L18"/>
    <property type="match status" value="1"/>
</dbReference>
<dbReference type="PANTHER" id="PTHR10934:SF2">
    <property type="entry name" value="LARGE RIBOSOMAL SUBUNIT PROTEIN EL18"/>
    <property type="match status" value="1"/>
</dbReference>
<dbReference type="Pfam" id="PF17135">
    <property type="entry name" value="Ribosomal_L18"/>
    <property type="match status" value="1"/>
</dbReference>
<dbReference type="SUPFAM" id="SSF52080">
    <property type="entry name" value="Ribosomal proteins L15p and L18e"/>
    <property type="match status" value="1"/>
</dbReference>
<reference key="1">
    <citation type="journal article" date="2002" name="Proc. Natl. Acad. Sci. U.S.A.">
        <title>Genome sequence of the hyperthermophilic crenarchaeon Pyrobaculum aerophilum.</title>
        <authorList>
            <person name="Fitz-Gibbon S.T."/>
            <person name="Ladner H."/>
            <person name="Kim U.-J."/>
            <person name="Stetter K.O."/>
            <person name="Simon M.I."/>
            <person name="Miller J.H."/>
        </authorList>
    </citation>
    <scope>NUCLEOTIDE SEQUENCE [LARGE SCALE GENOMIC DNA]</scope>
    <source>
        <strain>ATCC 51768 / DSM 7523 / JCM 9630 / CIP 104966 / NBRC 100827 / IM2</strain>
    </source>
</reference>
<organism>
    <name type="scientific">Pyrobaculum aerophilum (strain ATCC 51768 / DSM 7523 / JCM 9630 / CIP 104966 / NBRC 100827 / IM2)</name>
    <dbReference type="NCBI Taxonomy" id="178306"/>
    <lineage>
        <taxon>Archaea</taxon>
        <taxon>Thermoproteota</taxon>
        <taxon>Thermoprotei</taxon>
        <taxon>Thermoproteales</taxon>
        <taxon>Thermoproteaceae</taxon>
        <taxon>Pyrobaculum</taxon>
    </lineage>
</organism>
<gene>
    <name evidence="1" type="primary">rpl18e</name>
    <name type="ordered locus">PAE0672</name>
</gene>